<reference key="1">
    <citation type="journal article" date="1989" name="Curr. Genet.">
        <title>Two small open reading frames are co-transcribed with the pea chloroplast genes for the polypeptides of cytochrome b-559.</title>
        <authorList>
            <person name="Willey D.L."/>
            <person name="Gray J.C."/>
        </authorList>
    </citation>
    <scope>NUCLEOTIDE SEQUENCE [GENOMIC DNA]</scope>
</reference>
<reference key="2">
    <citation type="journal article" date="1997" name="J. Biol. Chem.">
        <title>Purification and determination of intact molecular mass by electrospray ionization mass spectrometry of the photosystem II reaction center subunits.</title>
        <authorList>
            <person name="Sharma J."/>
            <person name="Panico M."/>
            <person name="Barber J."/>
            <person name="Morris H.R."/>
        </authorList>
    </citation>
    <scope>MASS SPECTROMETRY</scope>
</reference>
<proteinExistence type="evidence at protein level"/>
<sequence length="83" mass="9415">MSGSTGERSFADIITSIRYWIIHSITIPSLFIAGWLFVSTGLAYDVFGSPRPNEYFTETRQGIPLITGRFDSLEQLDEFSRSF</sequence>
<geneLocation type="chloroplast"/>
<name>PSBE_PEA</name>
<gene>
    <name evidence="1" type="primary">psbE</name>
</gene>
<organism>
    <name type="scientific">Pisum sativum</name>
    <name type="common">Garden pea</name>
    <name type="synonym">Lathyrus oleraceus</name>
    <dbReference type="NCBI Taxonomy" id="3888"/>
    <lineage>
        <taxon>Eukaryota</taxon>
        <taxon>Viridiplantae</taxon>
        <taxon>Streptophyta</taxon>
        <taxon>Embryophyta</taxon>
        <taxon>Tracheophyta</taxon>
        <taxon>Spermatophyta</taxon>
        <taxon>Magnoliopsida</taxon>
        <taxon>eudicotyledons</taxon>
        <taxon>Gunneridae</taxon>
        <taxon>Pentapetalae</taxon>
        <taxon>rosids</taxon>
        <taxon>fabids</taxon>
        <taxon>Fabales</taxon>
        <taxon>Fabaceae</taxon>
        <taxon>Papilionoideae</taxon>
        <taxon>50 kb inversion clade</taxon>
        <taxon>NPAAA clade</taxon>
        <taxon>Hologalegina</taxon>
        <taxon>IRL clade</taxon>
        <taxon>Fabeae</taxon>
        <taxon>Pisum</taxon>
    </lineage>
</organism>
<keyword id="KW-0002">3D-structure</keyword>
<keyword id="KW-0150">Chloroplast</keyword>
<keyword id="KW-0249">Electron transport</keyword>
<keyword id="KW-0349">Heme</keyword>
<keyword id="KW-0408">Iron</keyword>
<keyword id="KW-0472">Membrane</keyword>
<keyword id="KW-0479">Metal-binding</keyword>
<keyword id="KW-0602">Photosynthesis</keyword>
<keyword id="KW-0604">Photosystem II</keyword>
<keyword id="KW-0934">Plastid</keyword>
<keyword id="KW-0793">Thylakoid</keyword>
<keyword id="KW-0812">Transmembrane</keyword>
<keyword id="KW-1133">Transmembrane helix</keyword>
<keyword id="KW-0813">Transport</keyword>
<dbReference type="EMBL" id="X15767">
    <property type="protein sequence ID" value="CAA33772.1"/>
    <property type="molecule type" value="Genomic_DNA"/>
</dbReference>
<dbReference type="PIR" id="A48310">
    <property type="entry name" value="A48310"/>
</dbReference>
<dbReference type="RefSeq" id="YP_003587551.1">
    <property type="nucleotide sequence ID" value="NC_014057.1"/>
</dbReference>
<dbReference type="PDB" id="5XNL">
    <property type="method" value="EM"/>
    <property type="resolution" value="2.70 A"/>
    <property type="chains" value="E/e=1-83"/>
</dbReference>
<dbReference type="PDB" id="5XNM">
    <property type="method" value="EM"/>
    <property type="resolution" value="3.20 A"/>
    <property type="chains" value="E/e=1-83"/>
</dbReference>
<dbReference type="PDB" id="6YP7">
    <property type="method" value="EM"/>
    <property type="resolution" value="3.80 A"/>
    <property type="chains" value="E/e=8-82"/>
</dbReference>
<dbReference type="PDBsum" id="5XNL"/>
<dbReference type="PDBsum" id="5XNM"/>
<dbReference type="PDBsum" id="6YP7"/>
<dbReference type="EMDB" id="EMD-10865"/>
<dbReference type="EMDB" id="EMD-6741"/>
<dbReference type="EMDB" id="EMD-6742"/>
<dbReference type="SMR" id="P13554"/>
<dbReference type="EnsemblPlants" id="Psat0s6989g0160.1">
    <property type="protein sequence ID" value="Psat0s6989g0160.1.cds1"/>
    <property type="gene ID" value="Psat0s6989g0160"/>
</dbReference>
<dbReference type="GeneID" id="9073099"/>
<dbReference type="Gramene" id="Psat0s6989g0160.1">
    <property type="protein sequence ID" value="Psat0s6989g0160.1.cds1"/>
    <property type="gene ID" value="Psat0s6989g0160"/>
</dbReference>
<dbReference type="GO" id="GO:0009535">
    <property type="term" value="C:chloroplast thylakoid membrane"/>
    <property type="evidence" value="ECO:0007669"/>
    <property type="project" value="UniProtKB-SubCell"/>
</dbReference>
<dbReference type="GO" id="GO:0009539">
    <property type="term" value="C:photosystem II reaction center"/>
    <property type="evidence" value="ECO:0007669"/>
    <property type="project" value="InterPro"/>
</dbReference>
<dbReference type="GO" id="GO:0009055">
    <property type="term" value="F:electron transfer activity"/>
    <property type="evidence" value="ECO:0007669"/>
    <property type="project" value="UniProtKB-UniRule"/>
</dbReference>
<dbReference type="GO" id="GO:0020037">
    <property type="term" value="F:heme binding"/>
    <property type="evidence" value="ECO:0007669"/>
    <property type="project" value="InterPro"/>
</dbReference>
<dbReference type="GO" id="GO:0005506">
    <property type="term" value="F:iron ion binding"/>
    <property type="evidence" value="ECO:0007669"/>
    <property type="project" value="UniProtKB-UniRule"/>
</dbReference>
<dbReference type="GO" id="GO:0009767">
    <property type="term" value="P:photosynthetic electron transport chain"/>
    <property type="evidence" value="ECO:0007669"/>
    <property type="project" value="InterPro"/>
</dbReference>
<dbReference type="Gene3D" id="1.20.5.860">
    <property type="entry name" value="Photosystem II cytochrome b559, alpha subunit"/>
    <property type="match status" value="1"/>
</dbReference>
<dbReference type="HAMAP" id="MF_00642">
    <property type="entry name" value="PSII_PsbE"/>
    <property type="match status" value="1"/>
</dbReference>
<dbReference type="InterPro" id="IPR006217">
    <property type="entry name" value="PSII_cyt_b559_asu"/>
</dbReference>
<dbReference type="InterPro" id="IPR037025">
    <property type="entry name" value="PSII_cyt_b559_asu_sf"/>
</dbReference>
<dbReference type="InterPro" id="IPR006216">
    <property type="entry name" value="PSII_cyt_b559_CS"/>
</dbReference>
<dbReference type="InterPro" id="IPR013081">
    <property type="entry name" value="PSII_cyt_b559_N"/>
</dbReference>
<dbReference type="InterPro" id="IPR013082">
    <property type="entry name" value="PSII_cytb559_asu_lum"/>
</dbReference>
<dbReference type="NCBIfam" id="TIGR01332">
    <property type="entry name" value="cyt_b559_alpha"/>
    <property type="match status" value="1"/>
</dbReference>
<dbReference type="PANTHER" id="PTHR33391">
    <property type="entry name" value="CYTOCHROME B559 SUBUNIT BETA-RELATED"/>
    <property type="match status" value="1"/>
</dbReference>
<dbReference type="PANTHER" id="PTHR33391:SF9">
    <property type="entry name" value="CYTOCHROME B559 SUBUNIT BETA-RELATED"/>
    <property type="match status" value="1"/>
</dbReference>
<dbReference type="Pfam" id="PF00283">
    <property type="entry name" value="Cytochrom_B559"/>
    <property type="match status" value="1"/>
</dbReference>
<dbReference type="Pfam" id="PF00284">
    <property type="entry name" value="Cytochrom_B559a"/>
    <property type="match status" value="1"/>
</dbReference>
<dbReference type="PIRSF" id="PIRSF000036">
    <property type="entry name" value="PsbE"/>
    <property type="match status" value="1"/>
</dbReference>
<dbReference type="SUPFAM" id="SSF161045">
    <property type="entry name" value="Cytochrome b559 subunits"/>
    <property type="match status" value="1"/>
</dbReference>
<dbReference type="PROSITE" id="PS00537">
    <property type="entry name" value="CYTOCHROME_B559"/>
    <property type="match status" value="1"/>
</dbReference>
<protein>
    <recommendedName>
        <fullName evidence="1">Cytochrome b559 subunit alpha</fullName>
    </recommendedName>
    <alternativeName>
        <fullName evidence="1">PSII reaction center subunit V</fullName>
    </alternativeName>
</protein>
<evidence type="ECO:0000255" key="1">
    <source>
        <dbReference type="HAMAP-Rule" id="MF_00642"/>
    </source>
</evidence>
<evidence type="ECO:0000269" key="2">
    <source>
    </source>
</evidence>
<evidence type="ECO:0007829" key="3">
    <source>
        <dbReference type="PDB" id="5XNL"/>
    </source>
</evidence>
<evidence type="ECO:0007829" key="4">
    <source>
        <dbReference type="PDB" id="5XNM"/>
    </source>
</evidence>
<comment type="function">
    <text evidence="1">This b-type cytochrome is tightly associated with the reaction center of photosystem II (PSII). PSII is a light-driven water:plastoquinone oxidoreductase that uses light energy to abstract electrons from H(2)O, generating O(2) and a proton gradient subsequently used for ATP formation. It consists of a core antenna complex that captures photons, and an electron transfer chain that converts photonic excitation into a charge separation.</text>
</comment>
<comment type="cofactor">
    <cofactor evidence="1">
        <name>heme b</name>
        <dbReference type="ChEBI" id="CHEBI:60344"/>
    </cofactor>
    <text evidence="1">With its partner (PsbF) binds heme. PSII binds additional chlorophylls, carotenoids and specific lipids.</text>
</comment>
<comment type="subunit">
    <text evidence="1">Heterodimer of an alpha subunit and a beta subunit. PSII is composed of 1 copy each of membrane proteins PsbA, PsbB, PsbC, PsbD, PsbE, PsbF, PsbH, PsbI, PsbJ, PsbK, PsbL, PsbM, PsbT, PsbX, PsbY, PsbZ, Psb30/Ycf12, at least 3 peripheral proteins of the oxygen-evolving complex and a large number of cofactors. It forms dimeric complexes.</text>
</comment>
<comment type="subcellular location">
    <subcellularLocation>
        <location evidence="1">Plastid</location>
        <location evidence="1">Chloroplast thylakoid membrane</location>
        <topology evidence="1">Single-pass membrane protein</topology>
    </subcellularLocation>
</comment>
<comment type="mass spectrometry" mass="9283.7" error="0.8" method="Electrospray" evidence="2"/>
<comment type="similarity">
    <text evidence="1">Belongs to the PsbE/PsbF family.</text>
</comment>
<accession>P13554</accession>
<feature type="initiator methionine" description="Removed" evidence="2">
    <location>
        <position position="1"/>
    </location>
</feature>
<feature type="chain" id="PRO_0000200329" description="Cytochrome b559 subunit alpha">
    <location>
        <begin position="2"/>
        <end position="83"/>
    </location>
</feature>
<feature type="transmembrane region" description="Helical" evidence="1">
    <location>
        <begin position="21"/>
        <end position="35"/>
    </location>
</feature>
<feature type="binding site" description="axial binding residue" evidence="1">
    <location>
        <position position="23"/>
    </location>
    <ligand>
        <name>heme</name>
        <dbReference type="ChEBI" id="CHEBI:30413"/>
        <note>ligand shared with beta subunit</note>
    </ligand>
    <ligandPart>
        <name>Fe</name>
        <dbReference type="ChEBI" id="CHEBI:18248"/>
    </ligandPart>
</feature>
<feature type="helix" evidence="3">
    <location>
        <begin position="10"/>
        <end position="14"/>
    </location>
</feature>
<feature type="helix" evidence="3">
    <location>
        <begin position="17"/>
        <end position="39"/>
    </location>
</feature>
<feature type="helix" evidence="3">
    <location>
        <begin position="42"/>
        <end position="46"/>
    </location>
</feature>
<feature type="strand" evidence="4">
    <location>
        <begin position="54"/>
        <end position="56"/>
    </location>
</feature>
<feature type="strand" evidence="4">
    <location>
        <begin position="69"/>
        <end position="71"/>
    </location>
</feature>
<feature type="helix" evidence="3">
    <location>
        <begin position="72"/>
        <end position="81"/>
    </location>
</feature>